<comment type="function">
    <text evidence="3">Export adapter involved in mRNA nuclear export in cancer cells. Binds and enhances the RNA-binding activity of the nuclear RNA export factor NXF1. Can restore mRNA export function in cells compromised by loss of mRNA export adapters (PubMed:25662211).</text>
</comment>
<comment type="subunit">
    <text evidence="3">Interacts with NXF1, NXF2, THOC1, THOC5, DDX39B/UAP56 and SRRT.</text>
</comment>
<comment type="interaction">
    <interactant intactId="EBI-10198848">
        <id>Q9P127</id>
    </interactant>
    <interactant intactId="EBI-743771">
        <id>Q92624</id>
        <label>APPBP2</label>
    </interactant>
    <organismsDiffer>false</organismsDiffer>
    <experiments>6</experiments>
</comment>
<comment type="interaction">
    <interactant intactId="EBI-10198848">
        <id>Q9P127</id>
    </interactant>
    <interactant intactId="EBI-1642333">
        <id>Q9BYV9</id>
        <label>BACH2</label>
    </interactant>
    <organismsDiffer>false</organismsDiffer>
    <experiments>3</experiments>
</comment>
<comment type="interaction">
    <interactant intactId="EBI-10198848">
        <id>Q9P127</id>
    </interactant>
    <interactant intactId="EBI-1045350">
        <id>Q16204</id>
        <label>CCDC6</label>
    </interactant>
    <organismsDiffer>false</organismsDiffer>
    <experiments>3</experiments>
</comment>
<comment type="interaction">
    <interactant intactId="EBI-10198848">
        <id>Q9P127</id>
    </interactant>
    <interactant intactId="EBI-750020">
        <id>P49760</id>
        <label>CLK2</label>
    </interactant>
    <organismsDiffer>false</organismsDiffer>
    <experiments>6</experiments>
</comment>
<comment type="interaction">
    <interactant intactId="EBI-10198848">
        <id>Q9P127</id>
    </interactant>
    <interactant intactId="EBI-348622">
        <id>Q13838</id>
        <label>DDX39B</label>
    </interactant>
    <organismsDiffer>false</organismsDiffer>
    <experiments>3</experiments>
</comment>
<comment type="interaction">
    <interactant intactId="EBI-10198848">
        <id>Q9P127</id>
    </interactant>
    <interactant intactId="EBI-739789">
        <id>Q92997</id>
        <label>DVL3</label>
    </interactant>
    <organismsDiffer>false</organismsDiffer>
    <experiments>3</experiments>
</comment>
<comment type="interaction">
    <interactant intactId="EBI-10198848">
        <id>Q9P127</id>
    </interactant>
    <interactant intactId="EBI-489887">
        <id>P50402</id>
        <label>EMD</label>
    </interactant>
    <organismsDiffer>false</organismsDiffer>
    <experiments>9</experiments>
</comment>
<comment type="interaction">
    <interactant intactId="EBI-10198848">
        <id>Q9P127</id>
    </interactant>
    <interactant intactId="EBI-10198738">
        <id>Q6FG41</id>
        <label>FOS</label>
    </interactant>
    <organismsDiffer>false</organismsDiffer>
    <experiments>3</experiments>
</comment>
<comment type="interaction">
    <interactant intactId="EBI-10198848">
        <id>Q9P127</id>
    </interactant>
    <interactant intactId="EBI-3893419">
        <id>P15408</id>
        <label>FOSL2</label>
    </interactant>
    <organismsDiffer>false</organismsDiffer>
    <experiments>3</experiments>
</comment>
<comment type="interaction">
    <interactant intactId="EBI-10198848">
        <id>Q9P127</id>
    </interactant>
    <interactant intactId="EBI-7116203">
        <id>O75031</id>
        <label>HSF2BP</label>
    </interactant>
    <organismsDiffer>false</organismsDiffer>
    <experiments>3</experiments>
</comment>
<comment type="interaction">
    <interactant intactId="EBI-10198848">
        <id>Q9P127</id>
    </interactant>
    <interactant intactId="EBI-10172150">
        <id>P60370</id>
        <label>KRTAP10-5</label>
    </interactant>
    <organismsDiffer>false</organismsDiffer>
    <experiments>3</experiments>
</comment>
<comment type="interaction">
    <interactant intactId="EBI-10198848">
        <id>Q9P127</id>
    </interactant>
    <interactant intactId="EBI-10171774">
        <id>P60410</id>
        <label>KRTAP10-8</label>
    </interactant>
    <organismsDiffer>false</organismsDiffer>
    <experiments>3</experiments>
</comment>
<comment type="interaction">
    <interactant intactId="EBI-10198848">
        <id>Q9P127</id>
    </interactant>
    <interactant intactId="EBI-10172052">
        <id>P60411</id>
        <label>KRTAP10-9</label>
    </interactant>
    <organismsDiffer>false</organismsDiffer>
    <experiments>3</experiments>
</comment>
<comment type="interaction">
    <interactant intactId="EBI-10198848">
        <id>Q9P127</id>
    </interactant>
    <interactant intactId="EBI-739832">
        <id>Q8TBB1</id>
        <label>LNX1</label>
    </interactant>
    <organismsDiffer>false</organismsDiffer>
    <experiments>3</experiments>
</comment>
<comment type="interaction">
    <interactant intactId="EBI-10198848">
        <id>Q9P127</id>
    </interactant>
    <interactant intactId="EBI-399257">
        <id>Q15014</id>
        <label>MORF4L2</label>
    </interactant>
    <organismsDiffer>false</organismsDiffer>
    <experiments>3</experiments>
</comment>
<comment type="interaction">
    <interactant intactId="EBI-10198848">
        <id>Q9P127</id>
    </interactant>
    <interactant intactId="EBI-743428">
        <id>Q9P2K3</id>
        <label>RCOR3</label>
    </interactant>
    <organismsDiffer>false</organismsDiffer>
    <experiments>3</experiments>
</comment>
<comment type="interaction">
    <interactant intactId="EBI-10198848">
        <id>Q9P127</id>
    </interactant>
    <interactant intactId="EBI-593303">
        <id>P78362</id>
        <label>SRPK2</label>
    </interactant>
    <organismsDiffer>false</organismsDiffer>
    <experiments>3</experiments>
</comment>
<comment type="interaction">
    <interactant intactId="EBI-10198848">
        <id>Q9P127</id>
    </interactant>
    <interactant intactId="EBI-3867173">
        <id>A7MD48</id>
        <label>SRRM4</label>
    </interactant>
    <organismsDiffer>false</organismsDiffer>
    <experiments>3</experiments>
</comment>
<comment type="interaction">
    <interactant intactId="EBI-10198848">
        <id>Q9P127</id>
    </interactant>
    <interactant intactId="EBI-740492">
        <id>Q9UKI8</id>
        <label>TLK1</label>
    </interactant>
    <organismsDiffer>false</organismsDiffer>
    <experiments>3</experiments>
</comment>
<comment type="interaction">
    <interactant intactId="EBI-10198848">
        <id>Q9P127</id>
    </interactant>
    <interactant intactId="EBI-949753">
        <id>Q63HR2</id>
        <label>TNS2</label>
    </interactant>
    <organismsDiffer>false</organismsDiffer>
    <experiments>3</experiments>
</comment>
<comment type="subcellular location">
    <subcellularLocation>
        <location evidence="2 3">Nucleus</location>
    </subcellularLocation>
    <subcellularLocation>
        <location evidence="3">Cytoplasm</location>
    </subcellularLocation>
    <text evidence="2 3">In nuclear speckles. Relocalizes to the cytoplasm during cell division.</text>
</comment>
<comment type="alternative products">
    <event type="alternative splicing"/>
    <isoform>
        <id>Q9P127-1</id>
        <name>1</name>
        <sequence type="displayed"/>
    </isoform>
    <isoform>
        <id>Q9P127-2</id>
        <name>2</name>
        <sequence type="described" ref="VSP_053926 VSP_053927"/>
    </isoform>
</comment>
<comment type="tissue specificity">
    <text evidence="2 3">Expressed specifically in testis. Also expressed in a wide variety of cancer types, but particularly high levels of expression observed in melanoma cells.</text>
</comment>
<feature type="chain" id="PRO_0000288649" description="Leucine zipper protein 4">
    <location>
        <begin position="1"/>
        <end position="313"/>
    </location>
</feature>
<feature type="region of interest" description="Disordered" evidence="1">
    <location>
        <begin position="1"/>
        <end position="238"/>
    </location>
</feature>
<feature type="region of interest" description="Interaction with DDX39B/UAP56" evidence="3">
    <location>
        <begin position="1"/>
        <end position="119"/>
    </location>
</feature>
<feature type="region of interest" description="Arg-rich; required for RNA-binding" evidence="5">
    <location>
        <begin position="51"/>
        <end position="80"/>
    </location>
</feature>
<feature type="region of interest" description="RS-containing His-rich (RS-H); necessary for nuclear localization" evidence="3">
    <location>
        <begin position="178"/>
        <end position="236"/>
    </location>
</feature>
<feature type="region of interest" description="Leucine-zipper; required for RNA-binding and for its relocalization to the cytoplasm during cell division" evidence="3">
    <location>
        <begin position="238"/>
        <end position="287"/>
    </location>
</feature>
<feature type="region of interest" description="Interaction with NXF1" evidence="3">
    <location>
        <begin position="241"/>
        <end position="313"/>
    </location>
</feature>
<feature type="region of interest" description="Disordered" evidence="1">
    <location>
        <begin position="290"/>
        <end position="313"/>
    </location>
</feature>
<feature type="short sequence motif" description="UAP56-binding motif (UBM); required for proper nuclear localization" evidence="3">
    <location>
        <begin position="22"/>
        <end position="40"/>
    </location>
</feature>
<feature type="compositionally biased region" description="Basic and acidic residues" evidence="1">
    <location>
        <begin position="34"/>
        <end position="60"/>
    </location>
</feature>
<feature type="compositionally biased region" description="Basic residues" evidence="1">
    <location>
        <begin position="65"/>
        <end position="77"/>
    </location>
</feature>
<feature type="compositionally biased region" description="Basic and acidic residues" evidence="1">
    <location>
        <begin position="81"/>
        <end position="92"/>
    </location>
</feature>
<feature type="compositionally biased region" description="Polar residues" evidence="1">
    <location>
        <begin position="126"/>
        <end position="141"/>
    </location>
</feature>
<feature type="compositionally biased region" description="Basic and acidic residues" evidence="1">
    <location>
        <begin position="142"/>
        <end position="168"/>
    </location>
</feature>
<feature type="compositionally biased region" description="Polar residues" evidence="1">
    <location>
        <begin position="169"/>
        <end position="179"/>
    </location>
</feature>
<feature type="compositionally biased region" description="Basic and acidic residues" evidence="1">
    <location>
        <begin position="199"/>
        <end position="226"/>
    </location>
</feature>
<feature type="compositionally biased region" description="Polar residues" evidence="1">
    <location>
        <begin position="304"/>
        <end position="313"/>
    </location>
</feature>
<feature type="modified residue" description="Phosphoserine" evidence="6">
    <location>
        <position position="234"/>
    </location>
</feature>
<feature type="splice variant" id="VSP_053926" description="In isoform 2." evidence="4">
    <original>MASFRKLTLSEKVPPNHPSRKKVNFLDMSLDD</original>
    <variation>MLKKKRIKDRTIVKRNRLQDSNQKLIDIAIGE</variation>
    <location>
        <begin position="1"/>
        <end position="32"/>
    </location>
</feature>
<feature type="splice variant" id="VSP_053927" description="In isoform 2." evidence="4">
    <location>
        <begin position="33"/>
        <end position="114"/>
    </location>
</feature>
<feature type="sequence variant" id="VAR_051146" description="In dbSNP:rs10482480.">
    <original>P</original>
    <variation>S</variation>
    <location>
        <position position="14"/>
    </location>
</feature>
<feature type="sequence variant" id="VAR_051147" description="In dbSNP:rs35314601.">
    <original>T</original>
    <variation>A</variation>
    <location>
        <position position="306"/>
    </location>
</feature>
<evidence type="ECO:0000256" key="1">
    <source>
        <dbReference type="SAM" id="MobiDB-lite"/>
    </source>
</evidence>
<evidence type="ECO:0000269" key="2">
    <source>
    </source>
</evidence>
<evidence type="ECO:0000269" key="3">
    <source>
    </source>
</evidence>
<evidence type="ECO:0000303" key="4">
    <source>
    </source>
</evidence>
<evidence type="ECO:0000303" key="5">
    <source>
    </source>
</evidence>
<evidence type="ECO:0007744" key="6">
    <source>
    </source>
</evidence>
<accession>Q9P127</accession>
<accession>B3KSD6</accession>
<organism>
    <name type="scientific">Homo sapiens</name>
    <name type="common">Human</name>
    <dbReference type="NCBI Taxonomy" id="9606"/>
    <lineage>
        <taxon>Eukaryota</taxon>
        <taxon>Metazoa</taxon>
        <taxon>Chordata</taxon>
        <taxon>Craniata</taxon>
        <taxon>Vertebrata</taxon>
        <taxon>Euteleostomi</taxon>
        <taxon>Mammalia</taxon>
        <taxon>Eutheria</taxon>
        <taxon>Euarchontoglires</taxon>
        <taxon>Primates</taxon>
        <taxon>Haplorrhini</taxon>
        <taxon>Catarrhini</taxon>
        <taxon>Hominidae</taxon>
        <taxon>Homo</taxon>
    </lineage>
</organism>
<sequence>MASFRKLTLSEKVPPNHPSRKKVNFLDMSLDDIIIYKELEGTNAEEEKNKRQNHSKKESPSRQQSKAHRHRHRRGYSRCRSNSEEGNHDKKPSQKPSGFKSGQHPLNGQPLIEQEKCSDNYEAQAEKNQGQSEGNQHQSEGNPDKSEESQGQPEENHHSERSRNHLERSLSQSDRSQGQLKRHHPQYERSHGQYKRSHGQSERSHGHSERSHGHSERSHGHSERSHGHSKRSRSQGDLVDTQSDLIATQRDLIATQKDLIATQRDLIATQRDLIVTQRDLVATERDLINQSGRSHGQSERHQRYSTGKNTITT</sequence>
<keyword id="KW-0025">Alternative splicing</keyword>
<keyword id="KW-0963">Cytoplasm</keyword>
<keyword id="KW-0509">mRNA transport</keyword>
<keyword id="KW-0539">Nucleus</keyword>
<keyword id="KW-0597">Phosphoprotein</keyword>
<keyword id="KW-1267">Proteomics identification</keyword>
<keyword id="KW-1185">Reference proteome</keyword>
<keyword id="KW-0694">RNA-binding</keyword>
<keyword id="KW-0813">Transport</keyword>
<name>LUZP4_HUMAN</name>
<dbReference type="EMBL" id="AF124430">
    <property type="protein sequence ID" value="AAF28870.1"/>
    <property type="molecule type" value="mRNA"/>
</dbReference>
<dbReference type="EMBL" id="AK093369">
    <property type="protein sequence ID" value="BAG52698.1"/>
    <property type="molecule type" value="mRNA"/>
</dbReference>
<dbReference type="EMBL" id="AL109751">
    <property type="protein sequence ID" value="CAC09922.1"/>
    <property type="molecule type" value="Genomic_DNA"/>
</dbReference>
<dbReference type="EMBL" id="BC128134">
    <property type="protein sequence ID" value="AAI28135.1"/>
    <property type="molecule type" value="mRNA"/>
</dbReference>
<dbReference type="CCDS" id="CCDS14567.1">
    <molecule id="Q9P127-1"/>
</dbReference>
<dbReference type="RefSeq" id="NP_001305769.1">
    <molecule id="Q9P127-2"/>
    <property type="nucleotide sequence ID" value="NM_001318840.2"/>
</dbReference>
<dbReference type="RefSeq" id="NP_057467.1">
    <molecule id="Q9P127-1"/>
    <property type="nucleotide sequence ID" value="NM_016383.5"/>
</dbReference>
<dbReference type="SMR" id="Q9P127"/>
<dbReference type="BioGRID" id="119383">
    <property type="interactions" value="99"/>
</dbReference>
<dbReference type="ComplexPortal" id="CPX-2488">
    <property type="entry name" value="TREX transcription-export complex, DX39B variant"/>
</dbReference>
<dbReference type="ComplexPortal" id="CPX-7261">
    <property type="entry name" value="TREX transcription-export complex, DX39A variant"/>
</dbReference>
<dbReference type="FunCoup" id="Q9P127">
    <property type="interactions" value="13"/>
</dbReference>
<dbReference type="IntAct" id="Q9P127">
    <property type="interactions" value="20"/>
</dbReference>
<dbReference type="STRING" id="9606.ENSP00000360988"/>
<dbReference type="iPTMnet" id="Q9P127"/>
<dbReference type="PhosphoSitePlus" id="Q9P127"/>
<dbReference type="BioMuta" id="LUZP4"/>
<dbReference type="DMDM" id="74753106"/>
<dbReference type="MassIVE" id="Q9P127"/>
<dbReference type="PaxDb" id="9606-ENSP00000360988"/>
<dbReference type="PeptideAtlas" id="Q9P127"/>
<dbReference type="ProteomicsDB" id="3632"/>
<dbReference type="ProteomicsDB" id="83637">
    <molecule id="Q9P127-1"/>
</dbReference>
<dbReference type="Antibodypedia" id="52074">
    <property type="antibodies" value="149 antibodies from 17 providers"/>
</dbReference>
<dbReference type="DNASU" id="51213"/>
<dbReference type="Ensembl" id="ENST00000371920.4">
    <molecule id="Q9P127-1"/>
    <property type="protein sequence ID" value="ENSP00000360988.3"/>
    <property type="gene ID" value="ENSG00000102021.11"/>
</dbReference>
<dbReference type="GeneID" id="51213"/>
<dbReference type="KEGG" id="hsa:51213"/>
<dbReference type="MANE-Select" id="ENST00000371920.4">
    <property type="protein sequence ID" value="ENSP00000360988.3"/>
    <property type="RefSeq nucleotide sequence ID" value="NM_016383.5"/>
    <property type="RefSeq protein sequence ID" value="NP_057467.1"/>
</dbReference>
<dbReference type="UCSC" id="uc004eqa.4">
    <molecule id="Q9P127-1"/>
    <property type="organism name" value="human"/>
</dbReference>
<dbReference type="AGR" id="HGNC:24971"/>
<dbReference type="CTD" id="51213"/>
<dbReference type="DisGeNET" id="51213"/>
<dbReference type="GeneCards" id="LUZP4"/>
<dbReference type="HGNC" id="HGNC:24971">
    <property type="gene designation" value="LUZP4"/>
</dbReference>
<dbReference type="HPA" id="ENSG00000102021">
    <property type="expression patterns" value="Tissue enriched (testis)"/>
</dbReference>
<dbReference type="MIM" id="300616">
    <property type="type" value="gene"/>
</dbReference>
<dbReference type="neXtProt" id="NX_Q9P127"/>
<dbReference type="OpenTargets" id="ENSG00000102021"/>
<dbReference type="PharmGKB" id="PA134920076"/>
<dbReference type="VEuPathDB" id="HostDB:ENSG00000102021"/>
<dbReference type="eggNOG" id="ENOG502STD9">
    <property type="taxonomic scope" value="Eukaryota"/>
</dbReference>
<dbReference type="GeneTree" id="ENSGT00950000183340"/>
<dbReference type="HOGENOM" id="CLU_082916_0_0_1"/>
<dbReference type="InParanoid" id="Q9P127"/>
<dbReference type="OMA" id="GKYTMTS"/>
<dbReference type="OrthoDB" id="9809010at2759"/>
<dbReference type="PAN-GO" id="Q9P127">
    <property type="GO annotations" value="0 GO annotations based on evolutionary models"/>
</dbReference>
<dbReference type="PhylomeDB" id="Q9P127"/>
<dbReference type="TreeFam" id="TF350091"/>
<dbReference type="PathwayCommons" id="Q9P127"/>
<dbReference type="Reactome" id="R-HSA-159236">
    <property type="pathway name" value="Transport of Mature mRNA derived from an Intron-Containing Transcript"/>
</dbReference>
<dbReference type="Reactome" id="R-HSA-72187">
    <property type="pathway name" value="mRNA 3'-end processing"/>
</dbReference>
<dbReference type="Reactome" id="R-HSA-73856">
    <property type="pathway name" value="RNA Polymerase II Transcription Termination"/>
</dbReference>
<dbReference type="SignaLink" id="Q9P127"/>
<dbReference type="BioGRID-ORCS" id="51213">
    <property type="hits" value="12 hits in 771 CRISPR screens"/>
</dbReference>
<dbReference type="GenomeRNAi" id="51213"/>
<dbReference type="Pharos" id="Q9P127">
    <property type="development level" value="Tbio"/>
</dbReference>
<dbReference type="PRO" id="PR:Q9P127"/>
<dbReference type="Proteomes" id="UP000005640">
    <property type="component" value="Chromosome X"/>
</dbReference>
<dbReference type="RNAct" id="Q9P127">
    <property type="molecule type" value="protein"/>
</dbReference>
<dbReference type="Bgee" id="ENSG00000102021">
    <property type="expression patterns" value="Expressed in primordial germ cell in gonad and 4 other cell types or tissues"/>
</dbReference>
<dbReference type="ExpressionAtlas" id="Q9P127">
    <property type="expression patterns" value="baseline and differential"/>
</dbReference>
<dbReference type="GO" id="GO:0005737">
    <property type="term" value="C:cytoplasm"/>
    <property type="evidence" value="ECO:0007669"/>
    <property type="project" value="UniProtKB-SubCell"/>
</dbReference>
<dbReference type="GO" id="GO:0005634">
    <property type="term" value="C:nucleus"/>
    <property type="evidence" value="ECO:0007669"/>
    <property type="project" value="UniProtKB-SubCell"/>
</dbReference>
<dbReference type="GO" id="GO:0003723">
    <property type="term" value="F:RNA binding"/>
    <property type="evidence" value="ECO:0007669"/>
    <property type="project" value="UniProtKB-KW"/>
</dbReference>
<dbReference type="GO" id="GO:0051028">
    <property type="term" value="P:mRNA transport"/>
    <property type="evidence" value="ECO:0007669"/>
    <property type="project" value="UniProtKB-KW"/>
</dbReference>
<dbReference type="InterPro" id="IPR050768">
    <property type="entry name" value="UPF0353/GerABKA_families"/>
</dbReference>
<dbReference type="PANTHER" id="PTHR22550:SF5">
    <property type="entry name" value="LEUCINE ZIPPER PROTEIN 4"/>
    <property type="match status" value="1"/>
</dbReference>
<dbReference type="PANTHER" id="PTHR22550">
    <property type="entry name" value="SPORE GERMINATION PROTEIN"/>
    <property type="match status" value="1"/>
</dbReference>
<gene>
    <name type="primary">LUZP4</name>
</gene>
<protein>
    <recommendedName>
        <fullName>Leucine zipper protein 4</fullName>
    </recommendedName>
    <alternativeName>
        <fullName>Cancer/testis antigen 28</fullName>
        <shortName>CT-28</shortName>
        <shortName>CT28</shortName>
    </alternativeName>
    <alternativeName>
        <fullName>Tumor antigen HOM-TES-85</fullName>
    </alternativeName>
</protein>
<reference key="1">
    <citation type="journal article" date="2002" name="Oncogene">
        <title>A novel tumour associated leucine zipper protein targeting to sites of gene transcription and splicing.</title>
        <authorList>
            <person name="Tuereci O."/>
            <person name="Sahin U."/>
            <person name="Koslowski M."/>
            <person name="Buss B."/>
            <person name="Bell C."/>
            <person name="Ballweber P."/>
            <person name="Zwick C."/>
            <person name="Eberle T."/>
            <person name="Zuber M."/>
            <person name="Villena-Heinsen C."/>
            <person name="Seitz G."/>
            <person name="Pfreundschuh M."/>
        </authorList>
    </citation>
    <scope>NUCLEOTIDE SEQUENCE [MRNA] (ISOFORM 1)</scope>
    <scope>SUBCELLULAR LOCATION</scope>
    <scope>TISSUE SPECIFICITY</scope>
    <source>
        <tissue>Testis</tissue>
    </source>
</reference>
<reference key="2">
    <citation type="journal article" date="2004" name="Nat. Genet.">
        <title>Complete sequencing and characterization of 21,243 full-length human cDNAs.</title>
        <authorList>
            <person name="Ota T."/>
            <person name="Suzuki Y."/>
            <person name="Nishikawa T."/>
            <person name="Otsuki T."/>
            <person name="Sugiyama T."/>
            <person name="Irie R."/>
            <person name="Wakamatsu A."/>
            <person name="Hayashi K."/>
            <person name="Sato H."/>
            <person name="Nagai K."/>
            <person name="Kimura K."/>
            <person name="Makita H."/>
            <person name="Sekine M."/>
            <person name="Obayashi M."/>
            <person name="Nishi T."/>
            <person name="Shibahara T."/>
            <person name="Tanaka T."/>
            <person name="Ishii S."/>
            <person name="Yamamoto J."/>
            <person name="Saito K."/>
            <person name="Kawai Y."/>
            <person name="Isono Y."/>
            <person name="Nakamura Y."/>
            <person name="Nagahari K."/>
            <person name="Murakami K."/>
            <person name="Yasuda T."/>
            <person name="Iwayanagi T."/>
            <person name="Wagatsuma M."/>
            <person name="Shiratori A."/>
            <person name="Sudo H."/>
            <person name="Hosoiri T."/>
            <person name="Kaku Y."/>
            <person name="Kodaira H."/>
            <person name="Kondo H."/>
            <person name="Sugawara M."/>
            <person name="Takahashi M."/>
            <person name="Kanda K."/>
            <person name="Yokoi T."/>
            <person name="Furuya T."/>
            <person name="Kikkawa E."/>
            <person name="Omura Y."/>
            <person name="Abe K."/>
            <person name="Kamihara K."/>
            <person name="Katsuta N."/>
            <person name="Sato K."/>
            <person name="Tanikawa M."/>
            <person name="Yamazaki M."/>
            <person name="Ninomiya K."/>
            <person name="Ishibashi T."/>
            <person name="Yamashita H."/>
            <person name="Murakawa K."/>
            <person name="Fujimori K."/>
            <person name="Tanai H."/>
            <person name="Kimata M."/>
            <person name="Watanabe M."/>
            <person name="Hiraoka S."/>
            <person name="Chiba Y."/>
            <person name="Ishida S."/>
            <person name="Ono Y."/>
            <person name="Takiguchi S."/>
            <person name="Watanabe S."/>
            <person name="Yosida M."/>
            <person name="Hotuta T."/>
            <person name="Kusano J."/>
            <person name="Kanehori K."/>
            <person name="Takahashi-Fujii A."/>
            <person name="Hara H."/>
            <person name="Tanase T.-O."/>
            <person name="Nomura Y."/>
            <person name="Togiya S."/>
            <person name="Komai F."/>
            <person name="Hara R."/>
            <person name="Takeuchi K."/>
            <person name="Arita M."/>
            <person name="Imose N."/>
            <person name="Musashino K."/>
            <person name="Yuuki H."/>
            <person name="Oshima A."/>
            <person name="Sasaki N."/>
            <person name="Aotsuka S."/>
            <person name="Yoshikawa Y."/>
            <person name="Matsunawa H."/>
            <person name="Ichihara T."/>
            <person name="Shiohata N."/>
            <person name="Sano S."/>
            <person name="Moriya S."/>
            <person name="Momiyama H."/>
            <person name="Satoh N."/>
            <person name="Takami S."/>
            <person name="Terashima Y."/>
            <person name="Suzuki O."/>
            <person name="Nakagawa S."/>
            <person name="Senoh A."/>
            <person name="Mizoguchi H."/>
            <person name="Goto Y."/>
            <person name="Shimizu F."/>
            <person name="Wakebe H."/>
            <person name="Hishigaki H."/>
            <person name="Watanabe T."/>
            <person name="Sugiyama A."/>
            <person name="Takemoto M."/>
            <person name="Kawakami B."/>
            <person name="Yamazaki M."/>
            <person name="Watanabe K."/>
            <person name="Kumagai A."/>
            <person name="Itakura S."/>
            <person name="Fukuzumi Y."/>
            <person name="Fujimori Y."/>
            <person name="Komiyama M."/>
            <person name="Tashiro H."/>
            <person name="Tanigami A."/>
            <person name="Fujiwara T."/>
            <person name="Ono T."/>
            <person name="Yamada K."/>
            <person name="Fujii Y."/>
            <person name="Ozaki K."/>
            <person name="Hirao M."/>
            <person name="Ohmori Y."/>
            <person name="Kawabata A."/>
            <person name="Hikiji T."/>
            <person name="Kobatake N."/>
            <person name="Inagaki H."/>
            <person name="Ikema Y."/>
            <person name="Okamoto S."/>
            <person name="Okitani R."/>
            <person name="Kawakami T."/>
            <person name="Noguchi S."/>
            <person name="Itoh T."/>
            <person name="Shigeta K."/>
            <person name="Senba T."/>
            <person name="Matsumura K."/>
            <person name="Nakajima Y."/>
            <person name="Mizuno T."/>
            <person name="Morinaga M."/>
            <person name="Sasaki M."/>
            <person name="Togashi T."/>
            <person name="Oyama M."/>
            <person name="Hata H."/>
            <person name="Watanabe M."/>
            <person name="Komatsu T."/>
            <person name="Mizushima-Sugano J."/>
            <person name="Satoh T."/>
            <person name="Shirai Y."/>
            <person name="Takahashi Y."/>
            <person name="Nakagawa K."/>
            <person name="Okumura K."/>
            <person name="Nagase T."/>
            <person name="Nomura N."/>
            <person name="Kikuchi H."/>
            <person name="Masuho Y."/>
            <person name="Yamashita R."/>
            <person name="Nakai K."/>
            <person name="Yada T."/>
            <person name="Nakamura Y."/>
            <person name="Ohara O."/>
            <person name="Isogai T."/>
            <person name="Sugano S."/>
        </authorList>
    </citation>
    <scope>NUCLEOTIDE SEQUENCE [LARGE SCALE MRNA] (ISOFORM 2)</scope>
    <source>
        <tissue>Testis</tissue>
    </source>
</reference>
<reference key="3">
    <citation type="journal article" date="2005" name="Nature">
        <title>The DNA sequence of the human X chromosome.</title>
        <authorList>
            <person name="Ross M.T."/>
            <person name="Grafham D.V."/>
            <person name="Coffey A.J."/>
            <person name="Scherer S."/>
            <person name="McLay K."/>
            <person name="Muzny D."/>
            <person name="Platzer M."/>
            <person name="Howell G.R."/>
            <person name="Burrows C."/>
            <person name="Bird C.P."/>
            <person name="Frankish A."/>
            <person name="Lovell F.L."/>
            <person name="Howe K.L."/>
            <person name="Ashurst J.L."/>
            <person name="Fulton R.S."/>
            <person name="Sudbrak R."/>
            <person name="Wen G."/>
            <person name="Jones M.C."/>
            <person name="Hurles M.E."/>
            <person name="Andrews T.D."/>
            <person name="Scott C.E."/>
            <person name="Searle S."/>
            <person name="Ramser J."/>
            <person name="Whittaker A."/>
            <person name="Deadman R."/>
            <person name="Carter N.P."/>
            <person name="Hunt S.E."/>
            <person name="Chen R."/>
            <person name="Cree A."/>
            <person name="Gunaratne P."/>
            <person name="Havlak P."/>
            <person name="Hodgson A."/>
            <person name="Metzker M.L."/>
            <person name="Richards S."/>
            <person name="Scott G."/>
            <person name="Steffen D."/>
            <person name="Sodergren E."/>
            <person name="Wheeler D.A."/>
            <person name="Worley K.C."/>
            <person name="Ainscough R."/>
            <person name="Ambrose K.D."/>
            <person name="Ansari-Lari M.A."/>
            <person name="Aradhya S."/>
            <person name="Ashwell R.I."/>
            <person name="Babbage A.K."/>
            <person name="Bagguley C.L."/>
            <person name="Ballabio A."/>
            <person name="Banerjee R."/>
            <person name="Barker G.E."/>
            <person name="Barlow K.F."/>
            <person name="Barrett I.P."/>
            <person name="Bates K.N."/>
            <person name="Beare D.M."/>
            <person name="Beasley H."/>
            <person name="Beasley O."/>
            <person name="Beck A."/>
            <person name="Bethel G."/>
            <person name="Blechschmidt K."/>
            <person name="Brady N."/>
            <person name="Bray-Allen S."/>
            <person name="Bridgeman A.M."/>
            <person name="Brown A.J."/>
            <person name="Brown M.J."/>
            <person name="Bonnin D."/>
            <person name="Bruford E.A."/>
            <person name="Buhay C."/>
            <person name="Burch P."/>
            <person name="Burford D."/>
            <person name="Burgess J."/>
            <person name="Burrill W."/>
            <person name="Burton J."/>
            <person name="Bye J.M."/>
            <person name="Carder C."/>
            <person name="Carrel L."/>
            <person name="Chako J."/>
            <person name="Chapman J.C."/>
            <person name="Chavez D."/>
            <person name="Chen E."/>
            <person name="Chen G."/>
            <person name="Chen Y."/>
            <person name="Chen Z."/>
            <person name="Chinault C."/>
            <person name="Ciccodicola A."/>
            <person name="Clark S.Y."/>
            <person name="Clarke G."/>
            <person name="Clee C.M."/>
            <person name="Clegg S."/>
            <person name="Clerc-Blankenburg K."/>
            <person name="Clifford K."/>
            <person name="Cobley V."/>
            <person name="Cole C.G."/>
            <person name="Conquer J.S."/>
            <person name="Corby N."/>
            <person name="Connor R.E."/>
            <person name="David R."/>
            <person name="Davies J."/>
            <person name="Davis C."/>
            <person name="Davis J."/>
            <person name="Delgado O."/>
            <person name="Deshazo D."/>
            <person name="Dhami P."/>
            <person name="Ding Y."/>
            <person name="Dinh H."/>
            <person name="Dodsworth S."/>
            <person name="Draper H."/>
            <person name="Dugan-Rocha S."/>
            <person name="Dunham A."/>
            <person name="Dunn M."/>
            <person name="Durbin K.J."/>
            <person name="Dutta I."/>
            <person name="Eades T."/>
            <person name="Ellwood M."/>
            <person name="Emery-Cohen A."/>
            <person name="Errington H."/>
            <person name="Evans K.L."/>
            <person name="Faulkner L."/>
            <person name="Francis F."/>
            <person name="Frankland J."/>
            <person name="Fraser A.E."/>
            <person name="Galgoczy P."/>
            <person name="Gilbert J."/>
            <person name="Gill R."/>
            <person name="Gloeckner G."/>
            <person name="Gregory S.G."/>
            <person name="Gribble S."/>
            <person name="Griffiths C."/>
            <person name="Grocock R."/>
            <person name="Gu Y."/>
            <person name="Gwilliam R."/>
            <person name="Hamilton C."/>
            <person name="Hart E.A."/>
            <person name="Hawes A."/>
            <person name="Heath P.D."/>
            <person name="Heitmann K."/>
            <person name="Hennig S."/>
            <person name="Hernandez J."/>
            <person name="Hinzmann B."/>
            <person name="Ho S."/>
            <person name="Hoffs M."/>
            <person name="Howden P.J."/>
            <person name="Huckle E.J."/>
            <person name="Hume J."/>
            <person name="Hunt P.J."/>
            <person name="Hunt A.R."/>
            <person name="Isherwood J."/>
            <person name="Jacob L."/>
            <person name="Johnson D."/>
            <person name="Jones S."/>
            <person name="de Jong P.J."/>
            <person name="Joseph S.S."/>
            <person name="Keenan S."/>
            <person name="Kelly S."/>
            <person name="Kershaw J.K."/>
            <person name="Khan Z."/>
            <person name="Kioschis P."/>
            <person name="Klages S."/>
            <person name="Knights A.J."/>
            <person name="Kosiura A."/>
            <person name="Kovar-Smith C."/>
            <person name="Laird G.K."/>
            <person name="Langford C."/>
            <person name="Lawlor S."/>
            <person name="Leversha M."/>
            <person name="Lewis L."/>
            <person name="Liu W."/>
            <person name="Lloyd C."/>
            <person name="Lloyd D.M."/>
            <person name="Loulseged H."/>
            <person name="Loveland J.E."/>
            <person name="Lovell J.D."/>
            <person name="Lozado R."/>
            <person name="Lu J."/>
            <person name="Lyne R."/>
            <person name="Ma J."/>
            <person name="Maheshwari M."/>
            <person name="Matthews L.H."/>
            <person name="McDowall J."/>
            <person name="McLaren S."/>
            <person name="McMurray A."/>
            <person name="Meidl P."/>
            <person name="Meitinger T."/>
            <person name="Milne S."/>
            <person name="Miner G."/>
            <person name="Mistry S.L."/>
            <person name="Morgan M."/>
            <person name="Morris S."/>
            <person name="Mueller I."/>
            <person name="Mullikin J.C."/>
            <person name="Nguyen N."/>
            <person name="Nordsiek G."/>
            <person name="Nyakatura G."/>
            <person name="O'dell C.N."/>
            <person name="Okwuonu G."/>
            <person name="Palmer S."/>
            <person name="Pandian R."/>
            <person name="Parker D."/>
            <person name="Parrish J."/>
            <person name="Pasternak S."/>
            <person name="Patel D."/>
            <person name="Pearce A.V."/>
            <person name="Pearson D.M."/>
            <person name="Pelan S.E."/>
            <person name="Perez L."/>
            <person name="Porter K.M."/>
            <person name="Ramsey Y."/>
            <person name="Reichwald K."/>
            <person name="Rhodes S."/>
            <person name="Ridler K.A."/>
            <person name="Schlessinger D."/>
            <person name="Schueler M.G."/>
            <person name="Sehra H.K."/>
            <person name="Shaw-Smith C."/>
            <person name="Shen H."/>
            <person name="Sheridan E.M."/>
            <person name="Shownkeen R."/>
            <person name="Skuce C.D."/>
            <person name="Smith M.L."/>
            <person name="Sotheran E.C."/>
            <person name="Steingruber H.E."/>
            <person name="Steward C.A."/>
            <person name="Storey R."/>
            <person name="Swann R.M."/>
            <person name="Swarbreck D."/>
            <person name="Tabor P.E."/>
            <person name="Taudien S."/>
            <person name="Taylor T."/>
            <person name="Teague B."/>
            <person name="Thomas K."/>
            <person name="Thorpe A."/>
            <person name="Timms K."/>
            <person name="Tracey A."/>
            <person name="Trevanion S."/>
            <person name="Tromans A.C."/>
            <person name="d'Urso M."/>
            <person name="Verduzco D."/>
            <person name="Villasana D."/>
            <person name="Waldron L."/>
            <person name="Wall M."/>
            <person name="Wang Q."/>
            <person name="Warren J."/>
            <person name="Warry G.L."/>
            <person name="Wei X."/>
            <person name="West A."/>
            <person name="Whitehead S.L."/>
            <person name="Whiteley M.N."/>
            <person name="Wilkinson J.E."/>
            <person name="Willey D.L."/>
            <person name="Williams G."/>
            <person name="Williams L."/>
            <person name="Williamson A."/>
            <person name="Williamson H."/>
            <person name="Wilming L."/>
            <person name="Woodmansey R.L."/>
            <person name="Wray P.W."/>
            <person name="Yen J."/>
            <person name="Zhang J."/>
            <person name="Zhou J."/>
            <person name="Zoghbi H."/>
            <person name="Zorilla S."/>
            <person name="Buck D."/>
            <person name="Reinhardt R."/>
            <person name="Poustka A."/>
            <person name="Rosenthal A."/>
            <person name="Lehrach H."/>
            <person name="Meindl A."/>
            <person name="Minx P.J."/>
            <person name="Hillier L.W."/>
            <person name="Willard H.F."/>
            <person name="Wilson R.K."/>
            <person name="Waterston R.H."/>
            <person name="Rice C.M."/>
            <person name="Vaudin M."/>
            <person name="Coulson A."/>
            <person name="Nelson D.L."/>
            <person name="Weinstock G."/>
            <person name="Sulston J.E."/>
            <person name="Durbin R.M."/>
            <person name="Hubbard T."/>
            <person name="Gibbs R.A."/>
            <person name="Beck S."/>
            <person name="Rogers J."/>
            <person name="Bentley D.R."/>
        </authorList>
    </citation>
    <scope>NUCLEOTIDE SEQUENCE [LARGE SCALE GENOMIC DNA]</scope>
</reference>
<reference key="4">
    <citation type="journal article" date="2004" name="Genome Res.">
        <title>The status, quality, and expansion of the NIH full-length cDNA project: the Mammalian Gene Collection (MGC).</title>
        <authorList>
            <consortium name="The MGC Project Team"/>
        </authorList>
    </citation>
    <scope>NUCLEOTIDE SEQUENCE [LARGE SCALE MRNA] (ISOFORM 1)</scope>
</reference>
<reference key="5">
    <citation type="journal article" date="2013" name="J. Proteome Res.">
        <title>Toward a comprehensive characterization of a human cancer cell phosphoproteome.</title>
        <authorList>
            <person name="Zhou H."/>
            <person name="Di Palma S."/>
            <person name="Preisinger C."/>
            <person name="Peng M."/>
            <person name="Polat A.N."/>
            <person name="Heck A.J."/>
            <person name="Mohammed S."/>
        </authorList>
    </citation>
    <scope>PHOSPHORYLATION [LARGE SCALE ANALYSIS] AT SER-234</scope>
    <scope>IDENTIFICATION BY MASS SPECTROMETRY [LARGE SCALE ANALYSIS]</scope>
    <source>
        <tissue>Erythroleukemia</tissue>
    </source>
</reference>
<reference key="6">
    <citation type="journal article" date="2015" name="Nucleic Acids Res.">
        <title>Luzp4 defines a new mRNA export pathway in cancer cells.</title>
        <authorList>
            <person name="Viphakone N."/>
            <person name="Cumberbatch M.G."/>
            <person name="Livingstone M.J."/>
            <person name="Heath P.R."/>
            <person name="Dickman M.J."/>
            <person name="Catto J.W."/>
            <person name="Wilson S.A."/>
        </authorList>
    </citation>
    <scope>FUNCTION</scope>
    <scope>SUBCELLULAR LOCATION</scope>
    <scope>INTERACTION WITH NXF1; NXF2; DDX39B; THOC1; THOC5 AND SRRT</scope>
    <scope>TISSUE SPECIFICITY</scope>
    <scope>RNA-BINDING</scope>
</reference>
<proteinExistence type="evidence at protein level"/>